<reference key="1">
    <citation type="journal article" date="2005" name="BMC Genomics">
        <title>Characterization of 954 bovine full-CDS cDNA sequences.</title>
        <authorList>
            <person name="Harhay G.P."/>
            <person name="Sonstegard T.S."/>
            <person name="Keele J.W."/>
            <person name="Heaton M.P."/>
            <person name="Clawson M.L."/>
            <person name="Snelling W.M."/>
            <person name="Wiedmann R.T."/>
            <person name="Van Tassell C.P."/>
            <person name="Smith T.P.L."/>
        </authorList>
    </citation>
    <scope>NUCLEOTIDE SEQUENCE [LARGE SCALE MRNA]</scope>
</reference>
<reference key="2">
    <citation type="submission" date="2006-09" db="EMBL/GenBank/DDBJ databases">
        <authorList>
            <consortium name="NIH - Mammalian Gene Collection (MGC) project"/>
        </authorList>
    </citation>
    <scope>NUCLEOTIDE SEQUENCE [LARGE SCALE MRNA]</scope>
    <source>
        <strain>Hereford</strain>
        <tissue>Fetal pons</tissue>
    </source>
</reference>
<dbReference type="EC" id="3.1.4.4" evidence="3"/>
<dbReference type="EMBL" id="BT026202">
    <property type="protein sequence ID" value="ABG67041.1"/>
    <property type="molecule type" value="mRNA"/>
</dbReference>
<dbReference type="EMBL" id="BC123547">
    <property type="protein sequence ID" value="AAI23548.1"/>
    <property type="molecule type" value="mRNA"/>
</dbReference>
<dbReference type="RefSeq" id="NP_001069295.1">
    <property type="nucleotide sequence ID" value="NM_001075827.1"/>
</dbReference>
<dbReference type="SMR" id="Q0V8L6"/>
<dbReference type="FunCoup" id="Q0V8L6">
    <property type="interactions" value="1366"/>
</dbReference>
<dbReference type="STRING" id="9913.ENSBTAP00000072886"/>
<dbReference type="PaxDb" id="9913-ENSBTAP00000035115"/>
<dbReference type="GeneID" id="522159"/>
<dbReference type="KEGG" id="bta:522159"/>
<dbReference type="CTD" id="5338"/>
<dbReference type="eggNOG" id="KOG1329">
    <property type="taxonomic scope" value="Eukaryota"/>
</dbReference>
<dbReference type="InParanoid" id="Q0V8L6"/>
<dbReference type="OrthoDB" id="14911at2759"/>
<dbReference type="Proteomes" id="UP000009136">
    <property type="component" value="Unplaced"/>
</dbReference>
<dbReference type="GO" id="GO:0031410">
    <property type="term" value="C:cytoplasmic vesicle"/>
    <property type="evidence" value="ECO:0000318"/>
    <property type="project" value="GO_Central"/>
</dbReference>
<dbReference type="GO" id="GO:0005886">
    <property type="term" value="C:plasma membrane"/>
    <property type="evidence" value="ECO:0000318"/>
    <property type="project" value="GO_Central"/>
</dbReference>
<dbReference type="GO" id="GO:0035091">
    <property type="term" value="F:phosphatidylinositol binding"/>
    <property type="evidence" value="ECO:0007669"/>
    <property type="project" value="InterPro"/>
</dbReference>
<dbReference type="GO" id="GO:0004630">
    <property type="term" value="F:phospholipase D activity"/>
    <property type="evidence" value="ECO:0000318"/>
    <property type="project" value="GO_Central"/>
</dbReference>
<dbReference type="GO" id="GO:0035556">
    <property type="term" value="P:intracellular signal transduction"/>
    <property type="evidence" value="ECO:0007669"/>
    <property type="project" value="InterPro"/>
</dbReference>
<dbReference type="GO" id="GO:0006654">
    <property type="term" value="P:phosphatidic acid biosynthetic process"/>
    <property type="evidence" value="ECO:0007669"/>
    <property type="project" value="InterPro"/>
</dbReference>
<dbReference type="GO" id="GO:0009395">
    <property type="term" value="P:phospholipid catabolic process"/>
    <property type="evidence" value="ECO:0000318"/>
    <property type="project" value="GO_Central"/>
</dbReference>
<dbReference type="GO" id="GO:0060627">
    <property type="term" value="P:regulation of vesicle-mediated transport"/>
    <property type="evidence" value="ECO:0000318"/>
    <property type="project" value="GO_Central"/>
</dbReference>
<dbReference type="CDD" id="cd01254">
    <property type="entry name" value="PH_PLD"/>
    <property type="match status" value="1"/>
</dbReference>
<dbReference type="CDD" id="cd09845">
    <property type="entry name" value="PLDc_vPLD2_2"/>
    <property type="match status" value="1"/>
</dbReference>
<dbReference type="FunFam" id="2.30.29.30:FF:000114">
    <property type="entry name" value="Phospholipase"/>
    <property type="match status" value="1"/>
</dbReference>
<dbReference type="FunFam" id="3.30.1520.10:FF:000027">
    <property type="entry name" value="Phospholipase"/>
    <property type="match status" value="1"/>
</dbReference>
<dbReference type="FunFam" id="3.30.870.10:FF:000005">
    <property type="entry name" value="Phospholipase"/>
    <property type="match status" value="1"/>
</dbReference>
<dbReference type="FunFam" id="3.30.870.10:FF:000022">
    <property type="entry name" value="Phospholipase"/>
    <property type="match status" value="1"/>
</dbReference>
<dbReference type="FunFam" id="3.30.870.10:FF:000048">
    <property type="entry name" value="Phospholipase"/>
    <property type="match status" value="1"/>
</dbReference>
<dbReference type="Gene3D" id="3.30.870.10">
    <property type="entry name" value="Endonuclease Chain A"/>
    <property type="match status" value="2"/>
</dbReference>
<dbReference type="Gene3D" id="3.30.1520.10">
    <property type="entry name" value="Phox-like domain"/>
    <property type="match status" value="1"/>
</dbReference>
<dbReference type="Gene3D" id="2.30.29.30">
    <property type="entry name" value="Pleckstrin-homology domain (PH domain)/Phosphotyrosine-binding domain (PTB)"/>
    <property type="match status" value="1"/>
</dbReference>
<dbReference type="InterPro" id="IPR011993">
    <property type="entry name" value="PH-like_dom_sf"/>
</dbReference>
<dbReference type="InterPro" id="IPR025202">
    <property type="entry name" value="PLD-like_dom"/>
</dbReference>
<dbReference type="InterPro" id="IPR001736">
    <property type="entry name" value="PLipase_D/transphosphatidylase"/>
</dbReference>
<dbReference type="InterPro" id="IPR016555">
    <property type="entry name" value="PLipase_D_euk"/>
</dbReference>
<dbReference type="InterPro" id="IPR015679">
    <property type="entry name" value="PLipase_D_fam"/>
</dbReference>
<dbReference type="InterPro" id="IPR001683">
    <property type="entry name" value="PX_dom"/>
</dbReference>
<dbReference type="InterPro" id="IPR036871">
    <property type="entry name" value="PX_dom_sf"/>
</dbReference>
<dbReference type="PANTHER" id="PTHR18896">
    <property type="entry name" value="PHOSPHOLIPASE D"/>
    <property type="match status" value="1"/>
</dbReference>
<dbReference type="PANTHER" id="PTHR18896:SF121">
    <property type="entry name" value="PHOSPHOLIPASE D2"/>
    <property type="match status" value="1"/>
</dbReference>
<dbReference type="Pfam" id="PF00614">
    <property type="entry name" value="PLDc"/>
    <property type="match status" value="1"/>
</dbReference>
<dbReference type="Pfam" id="PF13091">
    <property type="entry name" value="PLDc_2"/>
    <property type="match status" value="1"/>
</dbReference>
<dbReference type="Pfam" id="PF00787">
    <property type="entry name" value="PX"/>
    <property type="match status" value="1"/>
</dbReference>
<dbReference type="PIRSF" id="PIRSF009376">
    <property type="entry name" value="Phospholipase_D_euk"/>
    <property type="match status" value="1"/>
</dbReference>
<dbReference type="SMART" id="SM00155">
    <property type="entry name" value="PLDc"/>
    <property type="match status" value="2"/>
</dbReference>
<dbReference type="SMART" id="SM00312">
    <property type="entry name" value="PX"/>
    <property type="match status" value="1"/>
</dbReference>
<dbReference type="SUPFAM" id="SSF50729">
    <property type="entry name" value="PH domain-like"/>
    <property type="match status" value="1"/>
</dbReference>
<dbReference type="SUPFAM" id="SSF56024">
    <property type="entry name" value="Phospholipase D/nuclease"/>
    <property type="match status" value="2"/>
</dbReference>
<dbReference type="SUPFAM" id="SSF64268">
    <property type="entry name" value="PX domain"/>
    <property type="match status" value="1"/>
</dbReference>
<dbReference type="PROSITE" id="PS50035">
    <property type="entry name" value="PLD"/>
    <property type="match status" value="2"/>
</dbReference>
<dbReference type="PROSITE" id="PS50195">
    <property type="entry name" value="PX"/>
    <property type="match status" value="1"/>
</dbReference>
<organism>
    <name type="scientific">Bos taurus</name>
    <name type="common">Bovine</name>
    <dbReference type="NCBI Taxonomy" id="9913"/>
    <lineage>
        <taxon>Eukaryota</taxon>
        <taxon>Metazoa</taxon>
        <taxon>Chordata</taxon>
        <taxon>Craniata</taxon>
        <taxon>Vertebrata</taxon>
        <taxon>Euteleostomi</taxon>
        <taxon>Mammalia</taxon>
        <taxon>Eutheria</taxon>
        <taxon>Laurasiatheria</taxon>
        <taxon>Artiodactyla</taxon>
        <taxon>Ruminantia</taxon>
        <taxon>Pecora</taxon>
        <taxon>Bovidae</taxon>
        <taxon>Bovinae</taxon>
        <taxon>Bos</taxon>
    </lineage>
</organism>
<feature type="chain" id="PRO_0000253038" description="Phospholipase D2">
    <location>
        <begin position="1"/>
        <end position="933"/>
    </location>
</feature>
<feature type="domain" description="PX" evidence="4">
    <location>
        <begin position="65"/>
        <end position="195"/>
    </location>
</feature>
<feature type="domain" description="PH">
    <location>
        <begin position="203"/>
        <end position="311"/>
    </location>
</feature>
<feature type="domain" description="PLD phosphodiesterase 1" evidence="5">
    <location>
        <begin position="437"/>
        <end position="464"/>
    </location>
</feature>
<feature type="domain" description="PLD phosphodiesterase 2" evidence="5">
    <location>
        <begin position="751"/>
        <end position="778"/>
    </location>
</feature>
<feature type="region of interest" description="Disordered" evidence="6">
    <location>
        <begin position="1"/>
        <end position="20"/>
    </location>
</feature>
<feature type="region of interest" description="Disordered" evidence="6">
    <location>
        <begin position="134"/>
        <end position="160"/>
    </location>
</feature>
<feature type="region of interest" description="Catalytic">
    <location>
        <begin position="441"/>
        <end position="788"/>
    </location>
</feature>
<sequence>MAATPQSLFPSGDDLDSSQLQMEPDEVDTLKEGEDPADRMHPFLAIYHLQPLKLHPLVFAPGVPVIAQVVGTERYTSGSKVGTCTLYSVRLTHGDFTWTTKKKFRHFQELHRDLLRHKVFMSLLPLARFAVASSPAPEGDSREIPSLPRAGPEGSSRRTASKQKYLENYLNRLLTMSFYRNYHAMTEFLEVSQLSFIPDLGCKGLEGVIRKRSGGHRVPGLTCCGRDQVCYRWSKRWLVVKDSFLLYMCLETGAISFVQLFDPGFKVQVGKRSTEARYGVRVDTSHRSLILKCSSYRQARWWAQEITELAQGPGRDFIQLHRHDSYAPPRPGTLARWFVNGAGYFAAVADAILRAQEEIFITDWWLSPEIYLKRPAHSDDWRLDIMLKKKAEEGVHVSVLLFKEVELALAINSGYSKKALMLLHPNIKVMRHPDQVTLWAHHEKLLVVDQVVAFLGGLDLAYGRWDDLHYRLTDLGDSSESAAPQPPTSCSDLPATPDLTHNQLFWLGKDYSNLITKDWVQLDRPFDDFIDRETMPRMPWRDIGVVVHGSPARDLARHFIQRWNFTKTTKTKYKIPIYPYLLPKSTSTANQLPFTLSGGQCATVQVLRSVDRWSAGTLENSILNAYLHTIRESQHFLYIENQFFISCSDGRTVLNKVGDEIVDRILKAHKQGQCFRVYVLLPLLPGFEGDISTGGGNSIQAILHFTYRTLCRGEYSILHRLKAAMGTEWRNYISVCGLRTHGELGGHPVSELIYIHSKMLIADDRTVIIGSANINDRSLLGKRDSELAVLIEDTEMEPSLMNGVEYQAGRFALSLRKHCFSVILGAAARPHLDLRDPVCDAFFQLWQDTAESNANIYEQIFRCLPSNATRSLRALREYVVVEPLATVSPPLARSELNQVQGHLVHFPLKFLEDEYLLPSLGSKEGVMPLEVWT</sequence>
<evidence type="ECO:0000250" key="1">
    <source>
        <dbReference type="UniProtKB" id="O14939"/>
    </source>
</evidence>
<evidence type="ECO:0000250" key="2">
    <source>
        <dbReference type="UniProtKB" id="P70498"/>
    </source>
</evidence>
<evidence type="ECO:0000250" key="3">
    <source>
        <dbReference type="UniProtKB" id="P97813"/>
    </source>
</evidence>
<evidence type="ECO:0000255" key="4">
    <source>
        <dbReference type="PROSITE-ProRule" id="PRU00147"/>
    </source>
</evidence>
<evidence type="ECO:0000255" key="5">
    <source>
        <dbReference type="PROSITE-ProRule" id="PRU00153"/>
    </source>
</evidence>
<evidence type="ECO:0000256" key="6">
    <source>
        <dbReference type="SAM" id="MobiDB-lite"/>
    </source>
</evidence>
<evidence type="ECO:0000305" key="7"/>
<keyword id="KW-1003">Cell membrane</keyword>
<keyword id="KW-0378">Hydrolase</keyword>
<keyword id="KW-0442">Lipid degradation</keyword>
<keyword id="KW-0443">Lipid metabolism</keyword>
<keyword id="KW-0449">Lipoprotein</keyword>
<keyword id="KW-0472">Membrane</keyword>
<keyword id="KW-0597">Phosphoprotein</keyword>
<keyword id="KW-1185">Reference proteome</keyword>
<keyword id="KW-0677">Repeat</keyword>
<protein>
    <recommendedName>
        <fullName>Phospholipase D2</fullName>
        <shortName>PLD 2</shortName>
        <ecNumber evidence="3">3.1.4.4</ecNumber>
    </recommendedName>
    <alternativeName>
        <fullName>Choline phosphatase 2</fullName>
    </alternativeName>
    <alternativeName>
        <fullName>Phosphatidylcholine-hydrolyzing phospholipase D2</fullName>
    </alternativeName>
</protein>
<name>PLD2_BOVIN</name>
<gene>
    <name type="primary">PLD2</name>
</gene>
<proteinExistence type="evidence at transcript level"/>
<comment type="function">
    <text evidence="3">Function as phospholipase selective for phosphatidylcholine. May have a role in signal-induced cytoskeletal regulation and/or endocytosis.</text>
</comment>
<comment type="catalytic activity">
    <reaction evidence="3">
        <text>a 1,2-diacyl-sn-glycero-3-phosphocholine + H2O = a 1,2-diacyl-sn-glycero-3-phosphate + choline + H(+)</text>
        <dbReference type="Rhea" id="RHEA:14445"/>
        <dbReference type="ChEBI" id="CHEBI:15354"/>
        <dbReference type="ChEBI" id="CHEBI:15377"/>
        <dbReference type="ChEBI" id="CHEBI:15378"/>
        <dbReference type="ChEBI" id="CHEBI:57643"/>
        <dbReference type="ChEBI" id="CHEBI:58608"/>
        <dbReference type="EC" id="3.1.4.4"/>
    </reaction>
    <physiologicalReaction direction="left-to-right" evidence="3">
        <dbReference type="Rhea" id="RHEA:14446"/>
    </physiologicalReaction>
</comment>
<comment type="catalytic activity">
    <reaction evidence="3">
        <text>1,2-dihexadecanoyl-sn-glycero-3-phosphocholine + H2O = 1,2-dihexadecanoyl-sn-glycero-3-phosphate + choline + H(+)</text>
        <dbReference type="Rhea" id="RHEA:44872"/>
        <dbReference type="ChEBI" id="CHEBI:15354"/>
        <dbReference type="ChEBI" id="CHEBI:15377"/>
        <dbReference type="ChEBI" id="CHEBI:15378"/>
        <dbReference type="ChEBI" id="CHEBI:72859"/>
        <dbReference type="ChEBI" id="CHEBI:72999"/>
    </reaction>
    <physiologicalReaction direction="left-to-right" evidence="3">
        <dbReference type="Rhea" id="RHEA:44873"/>
    </physiologicalReaction>
</comment>
<comment type="subunit">
    <text evidence="1 3">Interacts with PIP5K1B (By similarity). Interacts with EGFR (By similarity).</text>
</comment>
<comment type="subcellular location">
    <subcellularLocation>
        <location evidence="3">Cell membrane</location>
        <topology evidence="3">Lipid-anchor</topology>
    </subcellularLocation>
</comment>
<comment type="PTM">
    <text evidence="2">Phosphorylated by FGR.</text>
</comment>
<comment type="similarity">
    <text evidence="7">Belongs to the phospholipase D family.</text>
</comment>
<accession>Q0V8L6</accession>
<accession>Q08DV7</accession>